<organism>
    <name type="scientific">Dictyostelium discoideum</name>
    <name type="common">Social amoeba</name>
    <dbReference type="NCBI Taxonomy" id="44689"/>
    <lineage>
        <taxon>Eukaryota</taxon>
        <taxon>Amoebozoa</taxon>
        <taxon>Evosea</taxon>
        <taxon>Eumycetozoa</taxon>
        <taxon>Dictyostelia</taxon>
        <taxon>Dictyosteliales</taxon>
        <taxon>Dictyosteliaceae</taxon>
        <taxon>Dictyostelium</taxon>
    </lineage>
</organism>
<sequence length="67" mass="7773">MLKYPLTQAMGCDIRLTNQQSQELYKLIIVTWFYKNAKFNSGLKVIIIVRLMKIIHQKQSSIPTSTS</sequence>
<accession>Q54JI2</accession>
<name>Y7748_DICDI</name>
<reference key="1">
    <citation type="journal article" date="2005" name="Nature">
        <title>The genome of the social amoeba Dictyostelium discoideum.</title>
        <authorList>
            <person name="Eichinger L."/>
            <person name="Pachebat J.A."/>
            <person name="Gloeckner G."/>
            <person name="Rajandream M.A."/>
            <person name="Sucgang R."/>
            <person name="Berriman M."/>
            <person name="Song J."/>
            <person name="Olsen R."/>
            <person name="Szafranski K."/>
            <person name="Xu Q."/>
            <person name="Tunggal B."/>
            <person name="Kummerfeld S."/>
            <person name="Madera M."/>
            <person name="Konfortov B.A."/>
            <person name="Rivero F."/>
            <person name="Bankier A.T."/>
            <person name="Lehmann R."/>
            <person name="Hamlin N."/>
            <person name="Davies R."/>
            <person name="Gaudet P."/>
            <person name="Fey P."/>
            <person name="Pilcher K."/>
            <person name="Chen G."/>
            <person name="Saunders D."/>
            <person name="Sodergren E.J."/>
            <person name="Davis P."/>
            <person name="Kerhornou A."/>
            <person name="Nie X."/>
            <person name="Hall N."/>
            <person name="Anjard C."/>
            <person name="Hemphill L."/>
            <person name="Bason N."/>
            <person name="Farbrother P."/>
            <person name="Desany B."/>
            <person name="Just E."/>
            <person name="Morio T."/>
            <person name="Rost R."/>
            <person name="Churcher C.M."/>
            <person name="Cooper J."/>
            <person name="Haydock S."/>
            <person name="van Driessche N."/>
            <person name="Cronin A."/>
            <person name="Goodhead I."/>
            <person name="Muzny D.M."/>
            <person name="Mourier T."/>
            <person name="Pain A."/>
            <person name="Lu M."/>
            <person name="Harper D."/>
            <person name="Lindsay R."/>
            <person name="Hauser H."/>
            <person name="James K.D."/>
            <person name="Quiles M."/>
            <person name="Madan Babu M."/>
            <person name="Saito T."/>
            <person name="Buchrieser C."/>
            <person name="Wardroper A."/>
            <person name="Felder M."/>
            <person name="Thangavelu M."/>
            <person name="Johnson D."/>
            <person name="Knights A."/>
            <person name="Loulseged H."/>
            <person name="Mungall K.L."/>
            <person name="Oliver K."/>
            <person name="Price C."/>
            <person name="Quail M.A."/>
            <person name="Urushihara H."/>
            <person name="Hernandez J."/>
            <person name="Rabbinowitsch E."/>
            <person name="Steffen D."/>
            <person name="Sanders M."/>
            <person name="Ma J."/>
            <person name="Kohara Y."/>
            <person name="Sharp S."/>
            <person name="Simmonds M.N."/>
            <person name="Spiegler S."/>
            <person name="Tivey A."/>
            <person name="Sugano S."/>
            <person name="White B."/>
            <person name="Walker D."/>
            <person name="Woodward J.R."/>
            <person name="Winckler T."/>
            <person name="Tanaka Y."/>
            <person name="Shaulsky G."/>
            <person name="Schleicher M."/>
            <person name="Weinstock G.M."/>
            <person name="Rosenthal A."/>
            <person name="Cox E.C."/>
            <person name="Chisholm R.L."/>
            <person name="Gibbs R.A."/>
            <person name="Loomis W.F."/>
            <person name="Platzer M."/>
            <person name="Kay R.R."/>
            <person name="Williams J.G."/>
            <person name="Dear P.H."/>
            <person name="Noegel A.A."/>
            <person name="Barrell B.G."/>
            <person name="Kuspa A."/>
        </authorList>
    </citation>
    <scope>NUCLEOTIDE SEQUENCE [LARGE SCALE GENOMIC DNA]</scope>
    <source>
        <strain>AX4</strain>
    </source>
</reference>
<gene>
    <name type="ORF">DDB_G0288035</name>
</gene>
<keyword id="KW-1185">Reference proteome</keyword>
<protein>
    <recommendedName>
        <fullName>Putative uncharacterized protein DDB_G0288035</fullName>
    </recommendedName>
</protein>
<dbReference type="EMBL" id="AAFI02000107">
    <property type="protein sequence ID" value="EAL63443.1"/>
    <property type="molecule type" value="Genomic_DNA"/>
</dbReference>
<dbReference type="RefSeq" id="XP_636949.1">
    <property type="nucleotide sequence ID" value="XM_631857.1"/>
</dbReference>
<dbReference type="PaxDb" id="44689-DDB0187748"/>
<dbReference type="EnsemblProtists" id="EAL63443">
    <property type="protein sequence ID" value="EAL63443"/>
    <property type="gene ID" value="DDB_G0288035"/>
</dbReference>
<dbReference type="GeneID" id="8626424"/>
<dbReference type="KEGG" id="ddi:DDB_G0288035"/>
<dbReference type="dictyBase" id="DDB_G0288035"/>
<dbReference type="VEuPathDB" id="AmoebaDB:DDB_G0288035"/>
<dbReference type="HOGENOM" id="CLU_2817803_0_0_1"/>
<dbReference type="InParanoid" id="Q54JI2"/>
<dbReference type="PRO" id="PR:Q54JI2"/>
<dbReference type="Proteomes" id="UP000002195">
    <property type="component" value="Chromosome 5"/>
</dbReference>
<proteinExistence type="predicted"/>
<feature type="chain" id="PRO_0000347000" description="Putative uncharacterized protein DDB_G0288035">
    <location>
        <begin position="1"/>
        <end position="67"/>
    </location>
</feature>